<gene>
    <name evidence="1" type="primary">ihfA</name>
    <name evidence="1" type="synonym">himA</name>
    <name type="ordered locus">VS_1721</name>
</gene>
<organism>
    <name type="scientific">Vibrio atlanticus (strain LGP32)</name>
    <name type="common">Vibrio splendidus (strain Mel32)</name>
    <dbReference type="NCBI Taxonomy" id="575788"/>
    <lineage>
        <taxon>Bacteria</taxon>
        <taxon>Pseudomonadati</taxon>
        <taxon>Pseudomonadota</taxon>
        <taxon>Gammaproteobacteria</taxon>
        <taxon>Vibrionales</taxon>
        <taxon>Vibrionaceae</taxon>
        <taxon>Vibrio</taxon>
    </lineage>
</organism>
<dbReference type="EMBL" id="FM954972">
    <property type="protein sequence ID" value="CAV18905.1"/>
    <property type="molecule type" value="Genomic_DNA"/>
</dbReference>
<dbReference type="SMR" id="B7VPF6"/>
<dbReference type="STRING" id="575788.VS_1721"/>
<dbReference type="KEGG" id="vsp:VS_1721"/>
<dbReference type="eggNOG" id="COG0776">
    <property type="taxonomic scope" value="Bacteria"/>
</dbReference>
<dbReference type="HOGENOM" id="CLU_105066_1_3_6"/>
<dbReference type="Proteomes" id="UP000009100">
    <property type="component" value="Chromosome 1"/>
</dbReference>
<dbReference type="GO" id="GO:0005829">
    <property type="term" value="C:cytosol"/>
    <property type="evidence" value="ECO:0007669"/>
    <property type="project" value="TreeGrafter"/>
</dbReference>
<dbReference type="GO" id="GO:0003677">
    <property type="term" value="F:DNA binding"/>
    <property type="evidence" value="ECO:0007669"/>
    <property type="project" value="UniProtKB-UniRule"/>
</dbReference>
<dbReference type="GO" id="GO:0030527">
    <property type="term" value="F:structural constituent of chromatin"/>
    <property type="evidence" value="ECO:0007669"/>
    <property type="project" value="InterPro"/>
</dbReference>
<dbReference type="GO" id="GO:0006310">
    <property type="term" value="P:DNA recombination"/>
    <property type="evidence" value="ECO:0007669"/>
    <property type="project" value="UniProtKB-UniRule"/>
</dbReference>
<dbReference type="GO" id="GO:0009893">
    <property type="term" value="P:positive regulation of metabolic process"/>
    <property type="evidence" value="ECO:0007669"/>
    <property type="project" value="UniProtKB-ARBA"/>
</dbReference>
<dbReference type="GO" id="GO:0006355">
    <property type="term" value="P:regulation of DNA-templated transcription"/>
    <property type="evidence" value="ECO:0007669"/>
    <property type="project" value="UniProtKB-UniRule"/>
</dbReference>
<dbReference type="GO" id="GO:0006417">
    <property type="term" value="P:regulation of translation"/>
    <property type="evidence" value="ECO:0007669"/>
    <property type="project" value="UniProtKB-UniRule"/>
</dbReference>
<dbReference type="CDD" id="cd13835">
    <property type="entry name" value="IHF_A"/>
    <property type="match status" value="1"/>
</dbReference>
<dbReference type="FunFam" id="4.10.520.10:FF:000002">
    <property type="entry name" value="Integration host factor subunit alpha"/>
    <property type="match status" value="1"/>
</dbReference>
<dbReference type="Gene3D" id="4.10.520.10">
    <property type="entry name" value="IHF-like DNA-binding proteins"/>
    <property type="match status" value="1"/>
</dbReference>
<dbReference type="HAMAP" id="MF_00380">
    <property type="entry name" value="IHF_alpha"/>
    <property type="match status" value="1"/>
</dbReference>
<dbReference type="InterPro" id="IPR000119">
    <property type="entry name" value="Hist_DNA-bd"/>
</dbReference>
<dbReference type="InterPro" id="IPR020816">
    <property type="entry name" value="Histone-like_DNA-bd_CS"/>
</dbReference>
<dbReference type="InterPro" id="IPR010992">
    <property type="entry name" value="IHF-like_DNA-bd_dom_sf"/>
</dbReference>
<dbReference type="InterPro" id="IPR005684">
    <property type="entry name" value="IHF_alpha"/>
</dbReference>
<dbReference type="NCBIfam" id="TIGR00987">
    <property type="entry name" value="himA"/>
    <property type="match status" value="1"/>
</dbReference>
<dbReference type="NCBIfam" id="NF001401">
    <property type="entry name" value="PRK00285.1"/>
    <property type="match status" value="1"/>
</dbReference>
<dbReference type="PANTHER" id="PTHR33175">
    <property type="entry name" value="DNA-BINDING PROTEIN HU"/>
    <property type="match status" value="1"/>
</dbReference>
<dbReference type="PANTHER" id="PTHR33175:SF2">
    <property type="entry name" value="INTEGRATION HOST FACTOR SUBUNIT ALPHA"/>
    <property type="match status" value="1"/>
</dbReference>
<dbReference type="Pfam" id="PF00216">
    <property type="entry name" value="Bac_DNA_binding"/>
    <property type="match status" value="1"/>
</dbReference>
<dbReference type="PRINTS" id="PR01727">
    <property type="entry name" value="DNABINDINGHU"/>
</dbReference>
<dbReference type="SMART" id="SM00411">
    <property type="entry name" value="BHL"/>
    <property type="match status" value="1"/>
</dbReference>
<dbReference type="SUPFAM" id="SSF47729">
    <property type="entry name" value="IHF-like DNA-binding proteins"/>
    <property type="match status" value="1"/>
</dbReference>
<dbReference type="PROSITE" id="PS00045">
    <property type="entry name" value="HISTONE_LIKE"/>
    <property type="match status" value="1"/>
</dbReference>
<evidence type="ECO:0000255" key="1">
    <source>
        <dbReference type="HAMAP-Rule" id="MF_00380"/>
    </source>
</evidence>
<evidence type="ECO:0000256" key="2">
    <source>
        <dbReference type="SAM" id="MobiDB-lite"/>
    </source>
</evidence>
<feature type="chain" id="PRO_1000190432" description="Integration host factor subunit alpha">
    <location>
        <begin position="1"/>
        <end position="98"/>
    </location>
</feature>
<feature type="region of interest" description="Disordered" evidence="2">
    <location>
        <begin position="53"/>
        <end position="72"/>
    </location>
</feature>
<feature type="compositionally biased region" description="Basic and acidic residues" evidence="2">
    <location>
        <begin position="53"/>
        <end position="69"/>
    </location>
</feature>
<accession>B7VPF6</accession>
<protein>
    <recommendedName>
        <fullName evidence="1">Integration host factor subunit alpha</fullName>
        <shortName evidence="1">IHF-alpha</shortName>
    </recommendedName>
</protein>
<keyword id="KW-0233">DNA recombination</keyword>
<keyword id="KW-0238">DNA-binding</keyword>
<keyword id="KW-0804">Transcription</keyword>
<keyword id="KW-0805">Transcription regulation</keyword>
<keyword id="KW-0810">Translation regulation</keyword>
<sequence>MALTKADLAENLFETLGYSKRDAKETVEVFFEEVRKALENGEQVKLSGFGNFDLREKNERPGRNPKTGEDIPISARRVVTFRPGQKLKARVENIKIEK</sequence>
<comment type="function">
    <text evidence="1">This protein is one of the two subunits of integration host factor, a specific DNA-binding protein that functions in genetic recombination as well as in transcriptional and translational control.</text>
</comment>
<comment type="subunit">
    <text evidence="1">Heterodimer of an alpha and a beta chain.</text>
</comment>
<comment type="similarity">
    <text evidence="1">Belongs to the bacterial histone-like protein family.</text>
</comment>
<reference key="1">
    <citation type="submission" date="2009-02" db="EMBL/GenBank/DDBJ databases">
        <title>Vibrio splendidus str. LGP32 complete genome.</title>
        <authorList>
            <person name="Mazel D."/>
            <person name="Le Roux F."/>
        </authorList>
    </citation>
    <scope>NUCLEOTIDE SEQUENCE [LARGE SCALE GENOMIC DNA]</scope>
    <source>
        <strain>LGP32</strain>
    </source>
</reference>
<name>IHFA_VIBA3</name>
<proteinExistence type="inferred from homology"/>